<reference key="1">
    <citation type="journal article" date="2004" name="Mol. Biol. Evol.">
        <title>The chloroplast genome of Nymphaea alba: whole-genome analyses and the problem of identifying the most basal angiosperm.</title>
        <authorList>
            <person name="Goremykin V.V."/>
            <person name="Hirsch-Ernst K.I."/>
            <person name="Woelfl S."/>
            <person name="Hellwig F.H."/>
        </authorList>
    </citation>
    <scope>NUCLEOTIDE SEQUENCE [LARGE SCALE GENOMIC DNA]</scope>
</reference>
<sequence length="750" mass="83176">MIIRSPEPEVKILVDRDPVKTSFEEWARPGHFSRTIAKGPDTTTWIWNLHADAHDFDSHTNDLEEISRKVFSAHFGQLSIIFLWLSGMYFHGARFSNYEAWLSDPTHIGPSAQVVWPIVGQEILNGDVGGGFRGIQITSGFFQIWRASGITSELQLYCTAIGALVFAALMLFAGWFHYHKAAPKLAWFQDVESMLNHHLAGLLGLGSLSWAGHQVHVSLPINQFLNAGVDPKEIPLPHEFILNRDLLAQLYPSFAEGATPFFTLNWSKYAEFLTFRGGLDPVTGGLWLTDIAHHHLAIAILFLIAGHMYKTNWGIGHDLKDILEAHKGPFTGEGHKGLYEILTTSWHAQLALNLAMLGSLTIVVAHHMYSMPPYPYLATDYGTQLSLFTHHMWIGGFLIVGAAAHAAIFMVRDYDPTTRYNDLLDRVLRHRDAIISHLNWVCIFLGFHSFGLYIHNDTMSALGRPQDMFSDTAIQLQPIFAQWIQNTHALAPSATAPGATAGTSLTWGGGDLVAVGGKVALLPIPLGTADFLVHHIHAFTIHVTVLILLKGVLFARSSRLIPDKANLGFRFPCDGPGRGGTCQVSAWDHVFLGLFWMYNAISVVIFHFSWKMQSDVWGSISDQGVVTHITGGNFAQSSITINGWLRDFLWAQSSQVIQSYGSSLSAYGLFFLGAHFVWAFSLMFLFSGRGYWQELIESIVWAHNKLKVAPATQPRALSIIQGRAVGVTHYLLGGIATTWAFFLARIISVG</sequence>
<comment type="function">
    <text>PsaA and PsaB bind P700, the primary electron donor of photosystem I (PSI), as well as the electron acceptors A0, A1 and FX. PSI is a plastocyanin-ferredoxin oxidoreductase, converting photonic excitation into a charge separation, which transfers an electron from the donor P700 chlorophyll pair to the spectroscopically characterized acceptors A0, A1, FX, FA and FB in turn. Oxidized P700 is reduced on the lumenal side of the thylakoid membrane by plastocyanin.</text>
</comment>
<comment type="catalytic activity">
    <reaction evidence="1">
        <text>reduced [plastocyanin] + hnu + oxidized [2Fe-2S]-[ferredoxin] = oxidized [plastocyanin] + reduced [2Fe-2S]-[ferredoxin]</text>
        <dbReference type="Rhea" id="RHEA:30407"/>
        <dbReference type="Rhea" id="RHEA-COMP:10000"/>
        <dbReference type="Rhea" id="RHEA-COMP:10001"/>
        <dbReference type="Rhea" id="RHEA-COMP:10039"/>
        <dbReference type="Rhea" id="RHEA-COMP:10040"/>
        <dbReference type="ChEBI" id="CHEBI:29036"/>
        <dbReference type="ChEBI" id="CHEBI:30212"/>
        <dbReference type="ChEBI" id="CHEBI:33737"/>
        <dbReference type="ChEBI" id="CHEBI:33738"/>
        <dbReference type="ChEBI" id="CHEBI:49552"/>
        <dbReference type="EC" id="1.97.1.12"/>
    </reaction>
</comment>
<comment type="cofactor">
    <text evidence="1">P700 is a chlorophyll a/chlorophyll a' dimer, A0 is one or more chlorophyll a, A1 is one or both phylloquinones and FX is a shared 4Fe-4S iron-sulfur center.</text>
</comment>
<comment type="subunit">
    <text evidence="1">The PsaA/B heterodimer binds the P700 chlorophyll special pair and subsequent electron acceptors. PSI consists of a core antenna complex that captures photons, and an electron transfer chain that converts photonic excitation into a charge separation. The eukaryotic PSI reaction center is composed of at least 11 subunits.</text>
</comment>
<comment type="subcellular location">
    <subcellularLocation>
        <location evidence="1">Plastid</location>
        <location evidence="1">Chloroplast thylakoid membrane</location>
        <topology evidence="1">Multi-pass membrane protein</topology>
    </subcellularLocation>
</comment>
<comment type="similarity">
    <text evidence="1">Belongs to the PsaA/PsaB family.</text>
</comment>
<dbReference type="EC" id="1.97.1.12" evidence="1"/>
<dbReference type="EMBL" id="AJ627251">
    <property type="protein sequence ID" value="CAF28593.1"/>
    <property type="molecule type" value="Genomic_DNA"/>
</dbReference>
<dbReference type="RefSeq" id="YP_053155.1">
    <property type="nucleotide sequence ID" value="NC_006050.1"/>
</dbReference>
<dbReference type="SMR" id="Q6EW48"/>
<dbReference type="GeneID" id="2896222"/>
<dbReference type="GO" id="GO:0009535">
    <property type="term" value="C:chloroplast thylakoid membrane"/>
    <property type="evidence" value="ECO:0007669"/>
    <property type="project" value="UniProtKB-SubCell"/>
</dbReference>
<dbReference type="GO" id="GO:0009522">
    <property type="term" value="C:photosystem I"/>
    <property type="evidence" value="ECO:0007669"/>
    <property type="project" value="UniProtKB-KW"/>
</dbReference>
<dbReference type="GO" id="GO:0051539">
    <property type="term" value="F:4 iron, 4 sulfur cluster binding"/>
    <property type="evidence" value="ECO:0007669"/>
    <property type="project" value="UniProtKB-KW"/>
</dbReference>
<dbReference type="GO" id="GO:0016168">
    <property type="term" value="F:chlorophyll binding"/>
    <property type="evidence" value="ECO:0007669"/>
    <property type="project" value="UniProtKB-KW"/>
</dbReference>
<dbReference type="GO" id="GO:0009055">
    <property type="term" value="F:electron transfer activity"/>
    <property type="evidence" value="ECO:0007669"/>
    <property type="project" value="UniProtKB-UniRule"/>
</dbReference>
<dbReference type="GO" id="GO:0000287">
    <property type="term" value="F:magnesium ion binding"/>
    <property type="evidence" value="ECO:0007669"/>
    <property type="project" value="UniProtKB-UniRule"/>
</dbReference>
<dbReference type="GO" id="GO:0016491">
    <property type="term" value="F:oxidoreductase activity"/>
    <property type="evidence" value="ECO:0007669"/>
    <property type="project" value="UniProtKB-KW"/>
</dbReference>
<dbReference type="GO" id="GO:0015979">
    <property type="term" value="P:photosynthesis"/>
    <property type="evidence" value="ECO:0007669"/>
    <property type="project" value="UniProtKB-UniRule"/>
</dbReference>
<dbReference type="FunFam" id="1.20.1130.10:FF:000001">
    <property type="entry name" value="Photosystem I P700 chlorophyll a apoprotein A2"/>
    <property type="match status" value="1"/>
</dbReference>
<dbReference type="Gene3D" id="1.20.1130.10">
    <property type="entry name" value="Photosystem I PsaA/PsaB"/>
    <property type="match status" value="1"/>
</dbReference>
<dbReference type="HAMAP" id="MF_00458">
    <property type="entry name" value="PSI_PsaA"/>
    <property type="match status" value="1"/>
</dbReference>
<dbReference type="InterPro" id="IPR006243">
    <property type="entry name" value="PSI_PsaA"/>
</dbReference>
<dbReference type="InterPro" id="IPR001280">
    <property type="entry name" value="PSI_PsaA/B"/>
</dbReference>
<dbReference type="InterPro" id="IPR020586">
    <property type="entry name" value="PSI_PsaA/B_CS"/>
</dbReference>
<dbReference type="InterPro" id="IPR036408">
    <property type="entry name" value="PSI_PsaA/B_sf"/>
</dbReference>
<dbReference type="NCBIfam" id="TIGR01335">
    <property type="entry name" value="psaA"/>
    <property type="match status" value="1"/>
</dbReference>
<dbReference type="PANTHER" id="PTHR30128">
    <property type="entry name" value="OUTER MEMBRANE PROTEIN, OMPA-RELATED"/>
    <property type="match status" value="1"/>
</dbReference>
<dbReference type="PANTHER" id="PTHR30128:SF19">
    <property type="entry name" value="PHOTOSYSTEM I P700 CHLOROPHYLL A APOPROTEIN A1-RELATED"/>
    <property type="match status" value="1"/>
</dbReference>
<dbReference type="Pfam" id="PF00223">
    <property type="entry name" value="PsaA_PsaB"/>
    <property type="match status" value="1"/>
</dbReference>
<dbReference type="PIRSF" id="PIRSF002905">
    <property type="entry name" value="PSI_A"/>
    <property type="match status" value="1"/>
</dbReference>
<dbReference type="PRINTS" id="PR00257">
    <property type="entry name" value="PHOTSYSPSAAB"/>
</dbReference>
<dbReference type="SUPFAM" id="SSF81558">
    <property type="entry name" value="Photosystem I subunits PsaA/PsaB"/>
    <property type="match status" value="1"/>
</dbReference>
<dbReference type="PROSITE" id="PS00419">
    <property type="entry name" value="PHOTOSYSTEM_I_PSAAB"/>
    <property type="match status" value="1"/>
</dbReference>
<feature type="chain" id="PRO_0000088562" description="Photosystem I P700 chlorophyll a apoprotein A1">
    <location>
        <begin position="1"/>
        <end position="750"/>
    </location>
</feature>
<feature type="transmembrane region" description="Helical; Name=I" evidence="1">
    <location>
        <begin position="70"/>
        <end position="93"/>
    </location>
</feature>
<feature type="transmembrane region" description="Helical; Name=II" evidence="1">
    <location>
        <begin position="156"/>
        <end position="179"/>
    </location>
</feature>
<feature type="transmembrane region" description="Helical; Name=III" evidence="1">
    <location>
        <begin position="195"/>
        <end position="219"/>
    </location>
</feature>
<feature type="transmembrane region" description="Helical; Name=IV" evidence="1">
    <location>
        <begin position="291"/>
        <end position="309"/>
    </location>
</feature>
<feature type="transmembrane region" description="Helical; Name=V" evidence="1">
    <location>
        <begin position="346"/>
        <end position="369"/>
    </location>
</feature>
<feature type="transmembrane region" description="Helical; Name=VI" evidence="1">
    <location>
        <begin position="385"/>
        <end position="411"/>
    </location>
</feature>
<feature type="transmembrane region" description="Helical; Name=VII" evidence="1">
    <location>
        <begin position="433"/>
        <end position="455"/>
    </location>
</feature>
<feature type="transmembrane region" description="Helical; Name=VIII" evidence="1">
    <location>
        <begin position="531"/>
        <end position="549"/>
    </location>
</feature>
<feature type="transmembrane region" description="Helical; Name=IX" evidence="1">
    <location>
        <begin position="589"/>
        <end position="610"/>
    </location>
</feature>
<feature type="transmembrane region" description="Helical; Name=X" evidence="1">
    <location>
        <begin position="664"/>
        <end position="686"/>
    </location>
</feature>
<feature type="transmembrane region" description="Helical; Name=XI" evidence="1">
    <location>
        <begin position="724"/>
        <end position="744"/>
    </location>
</feature>
<feature type="binding site" evidence="1">
    <location>
        <position position="573"/>
    </location>
    <ligand>
        <name>[4Fe-4S] cluster</name>
        <dbReference type="ChEBI" id="CHEBI:49883"/>
        <note>ligand shared between dimeric partners</note>
    </ligand>
</feature>
<feature type="binding site" evidence="1">
    <location>
        <position position="582"/>
    </location>
    <ligand>
        <name>[4Fe-4S] cluster</name>
        <dbReference type="ChEBI" id="CHEBI:49883"/>
        <note>ligand shared between dimeric partners</note>
    </ligand>
</feature>
<feature type="binding site" description="axial binding residue" evidence="1">
    <location>
        <position position="675"/>
    </location>
    <ligand>
        <name>chlorophyll a'</name>
        <dbReference type="ChEBI" id="CHEBI:189419"/>
        <label>A1</label>
    </ligand>
    <ligandPart>
        <name>Mg</name>
        <dbReference type="ChEBI" id="CHEBI:25107"/>
    </ligandPart>
</feature>
<feature type="binding site" description="axial binding residue" evidence="1">
    <location>
        <position position="683"/>
    </location>
    <ligand>
        <name>chlorophyll a</name>
        <dbReference type="ChEBI" id="CHEBI:58416"/>
        <label>A3</label>
    </ligand>
    <ligandPart>
        <name>Mg</name>
        <dbReference type="ChEBI" id="CHEBI:25107"/>
    </ligandPart>
</feature>
<feature type="binding site" evidence="1">
    <location>
        <position position="691"/>
    </location>
    <ligand>
        <name>chlorophyll a</name>
        <dbReference type="ChEBI" id="CHEBI:58416"/>
        <label>A3</label>
    </ligand>
</feature>
<feature type="binding site" evidence="1">
    <location>
        <position position="692"/>
    </location>
    <ligand>
        <name>phylloquinone</name>
        <dbReference type="ChEBI" id="CHEBI:18067"/>
        <label>A</label>
    </ligand>
</feature>
<name>PSAA_NYMAL</name>
<gene>
    <name evidence="1" type="primary">psaA</name>
</gene>
<accession>Q6EW48</accession>
<geneLocation type="chloroplast"/>
<proteinExistence type="inferred from homology"/>
<keyword id="KW-0004">4Fe-4S</keyword>
<keyword id="KW-0148">Chlorophyll</keyword>
<keyword id="KW-0150">Chloroplast</keyword>
<keyword id="KW-0157">Chromophore</keyword>
<keyword id="KW-0249">Electron transport</keyword>
<keyword id="KW-0408">Iron</keyword>
<keyword id="KW-0411">Iron-sulfur</keyword>
<keyword id="KW-0460">Magnesium</keyword>
<keyword id="KW-0472">Membrane</keyword>
<keyword id="KW-0479">Metal-binding</keyword>
<keyword id="KW-0560">Oxidoreductase</keyword>
<keyword id="KW-0602">Photosynthesis</keyword>
<keyword id="KW-0603">Photosystem I</keyword>
<keyword id="KW-0934">Plastid</keyword>
<keyword id="KW-0793">Thylakoid</keyword>
<keyword id="KW-0812">Transmembrane</keyword>
<keyword id="KW-1133">Transmembrane helix</keyword>
<keyword id="KW-0813">Transport</keyword>
<evidence type="ECO:0000255" key="1">
    <source>
        <dbReference type="HAMAP-Rule" id="MF_00458"/>
    </source>
</evidence>
<organism>
    <name type="scientific">Nymphaea alba</name>
    <name type="common">White water-lily</name>
    <name type="synonym">Castalia alba</name>
    <dbReference type="NCBI Taxonomy" id="34301"/>
    <lineage>
        <taxon>Eukaryota</taxon>
        <taxon>Viridiplantae</taxon>
        <taxon>Streptophyta</taxon>
        <taxon>Embryophyta</taxon>
        <taxon>Tracheophyta</taxon>
        <taxon>Spermatophyta</taxon>
        <taxon>Magnoliopsida</taxon>
        <taxon>Nymphaeales</taxon>
        <taxon>Nymphaeaceae</taxon>
        <taxon>Nymphaea</taxon>
    </lineage>
</organism>
<protein>
    <recommendedName>
        <fullName evidence="1">Photosystem I P700 chlorophyll a apoprotein A1</fullName>
        <ecNumber evidence="1">1.97.1.12</ecNumber>
    </recommendedName>
    <alternativeName>
        <fullName evidence="1">PSI-A</fullName>
    </alternativeName>
    <alternativeName>
        <fullName evidence="1">PsaA</fullName>
    </alternativeName>
</protein>